<sequence>MDTPNTFQNDDEIKAQAQVWKHMFGFAETIMLRSTVSLGIPDIIHNNGPVTLSQLVTHLPLKSTSIDRFHHFMRYLVHMQLFTISTDQITKEDKYELTPASKLLVHGHQKSLAPYVMLQTHPEEFSVWSHVINVLDGKKPYWESNDTSMYEKTEGDPEINEILNDAMTSHSTFMLPALVSGLMKENVLDGVASIVDVGGNSGVVAKGIVDAFPHVKCSVMDLNHVIERVIKNPKLDYVAGDMFTSIPNADAILLKSTLHNYEDDDCIKILNIAKEALPSTGGKVILVEIVVDTENLPLFTSARLSMGMDMMLMSGKERTKKEWEDLLRKANFTSHQVIPIMAIESIIVAYS</sequence>
<feature type="chain" id="PRO_0000204432" description="Columbamine O-methyltransferase">
    <location>
        <begin position="1"/>
        <end position="351"/>
    </location>
</feature>
<feature type="active site" description="Proton acceptor" evidence="2">
    <location>
        <position position="259"/>
    </location>
</feature>
<feature type="binding site" evidence="2">
    <location>
        <position position="198"/>
    </location>
    <ligand>
        <name>S-adenosyl-L-methionine</name>
        <dbReference type="ChEBI" id="CHEBI:59789"/>
    </ligand>
</feature>
<feature type="binding site" evidence="2">
    <location>
        <position position="221"/>
    </location>
    <ligand>
        <name>S-adenosyl-L-methionine</name>
        <dbReference type="ChEBI" id="CHEBI:59789"/>
    </ligand>
</feature>
<feature type="binding site" evidence="2">
    <location>
        <position position="241"/>
    </location>
    <ligand>
        <name>S-adenosyl-L-methionine</name>
        <dbReference type="ChEBI" id="CHEBI:59789"/>
    </ligand>
</feature>
<feature type="binding site" evidence="2">
    <location>
        <position position="242"/>
    </location>
    <ligand>
        <name>S-adenosyl-L-methionine</name>
        <dbReference type="ChEBI" id="CHEBI:59789"/>
    </ligand>
</feature>
<feature type="binding site" evidence="2">
    <location>
        <position position="255"/>
    </location>
    <ligand>
        <name>S-adenosyl-L-methionine</name>
        <dbReference type="ChEBI" id="CHEBI:59789"/>
    </ligand>
</feature>
<proteinExistence type="evidence at protein level"/>
<dbReference type="EC" id="2.1.1.118"/>
<dbReference type="EC" id="2.1.1.89"/>
<dbReference type="EMBL" id="AB073908">
    <property type="protein sequence ID" value="BAC22084.1"/>
    <property type="molecule type" value="mRNA"/>
</dbReference>
<dbReference type="SMR" id="Q8H9A8"/>
<dbReference type="KEGG" id="ag:BAC22084"/>
<dbReference type="BRENDA" id="2.1.1.89">
    <property type="organism ID" value="1610"/>
</dbReference>
<dbReference type="SABIO-RK" id="Q8H9A8"/>
<dbReference type="UniPathway" id="UPA00307">
    <property type="reaction ID" value="UER00445"/>
</dbReference>
<dbReference type="GO" id="GO:0030778">
    <property type="term" value="F:columbamine O-methyltransferase activity"/>
    <property type="evidence" value="ECO:0007669"/>
    <property type="project" value="UniProtKB-EC"/>
</dbReference>
<dbReference type="GO" id="GO:0008171">
    <property type="term" value="F:O-methyltransferase activity"/>
    <property type="evidence" value="ECO:0007669"/>
    <property type="project" value="InterPro"/>
</dbReference>
<dbReference type="GO" id="GO:0046983">
    <property type="term" value="F:protein dimerization activity"/>
    <property type="evidence" value="ECO:0007669"/>
    <property type="project" value="InterPro"/>
</dbReference>
<dbReference type="GO" id="GO:0030762">
    <property type="term" value="F:tetrahydrocolumbamine 2-O-methyltransferase activity"/>
    <property type="evidence" value="ECO:0007669"/>
    <property type="project" value="UniProtKB-EC"/>
</dbReference>
<dbReference type="GO" id="GO:0009820">
    <property type="term" value="P:alkaloid metabolic process"/>
    <property type="evidence" value="ECO:0007669"/>
    <property type="project" value="UniProtKB-KW"/>
</dbReference>
<dbReference type="GO" id="GO:0032259">
    <property type="term" value="P:methylation"/>
    <property type="evidence" value="ECO:0007669"/>
    <property type="project" value="UniProtKB-KW"/>
</dbReference>
<dbReference type="Gene3D" id="3.40.50.150">
    <property type="entry name" value="Vaccinia Virus protein VP39"/>
    <property type="match status" value="1"/>
</dbReference>
<dbReference type="Gene3D" id="1.10.10.10">
    <property type="entry name" value="Winged helix-like DNA-binding domain superfamily/Winged helix DNA-binding domain"/>
    <property type="match status" value="1"/>
</dbReference>
<dbReference type="InterPro" id="IPR016461">
    <property type="entry name" value="COMT-like"/>
</dbReference>
<dbReference type="InterPro" id="IPR001077">
    <property type="entry name" value="O_MeTrfase_dom"/>
</dbReference>
<dbReference type="InterPro" id="IPR012967">
    <property type="entry name" value="Plant_O-MeTrfase_dimerisation"/>
</dbReference>
<dbReference type="InterPro" id="IPR029063">
    <property type="entry name" value="SAM-dependent_MTases_sf"/>
</dbReference>
<dbReference type="InterPro" id="IPR036388">
    <property type="entry name" value="WH-like_DNA-bd_sf"/>
</dbReference>
<dbReference type="InterPro" id="IPR036390">
    <property type="entry name" value="WH_DNA-bd_sf"/>
</dbReference>
<dbReference type="PANTHER" id="PTHR11746">
    <property type="entry name" value="O-METHYLTRANSFERASE"/>
    <property type="match status" value="1"/>
</dbReference>
<dbReference type="Pfam" id="PF08100">
    <property type="entry name" value="Dimerisation"/>
    <property type="match status" value="1"/>
</dbReference>
<dbReference type="Pfam" id="PF00891">
    <property type="entry name" value="Methyltransf_2"/>
    <property type="match status" value="1"/>
</dbReference>
<dbReference type="PIRSF" id="PIRSF005739">
    <property type="entry name" value="O-mtase"/>
    <property type="match status" value="1"/>
</dbReference>
<dbReference type="SUPFAM" id="SSF53335">
    <property type="entry name" value="S-adenosyl-L-methionine-dependent methyltransferases"/>
    <property type="match status" value="1"/>
</dbReference>
<dbReference type="SUPFAM" id="SSF46785">
    <property type="entry name" value="Winged helix' DNA-binding domain"/>
    <property type="match status" value="1"/>
</dbReference>
<dbReference type="PROSITE" id="PS51683">
    <property type="entry name" value="SAM_OMT_II"/>
    <property type="match status" value="1"/>
</dbReference>
<protein>
    <recommendedName>
        <fullName>Columbamine O-methyltransferase</fullName>
        <shortName>CoOMT</shortName>
        <ecNumber>2.1.1.118</ecNumber>
    </recommendedName>
    <alternativeName>
        <fullName>Tetrahydrocolumbamine 2-O-methyltransferase</fullName>
        <ecNumber>2.1.1.89</ecNumber>
    </alternativeName>
</protein>
<name>COOMT_COPJA</name>
<keyword id="KW-0017">Alkaloid metabolism</keyword>
<keyword id="KW-0489">Methyltransferase</keyword>
<keyword id="KW-0949">S-adenosyl-L-methionine</keyword>
<keyword id="KW-0808">Transferase</keyword>
<reference key="1">
    <citation type="journal article" date="2002" name="Eur. J. Biochem.">
        <title>Molecular cloning of columbamine O-methyltransferase from cultured Coptis japonica cells.</title>
        <authorList>
            <person name="Morishige T."/>
            <person name="Dubouzet E."/>
            <person name="Choi K.-B."/>
            <person name="Yazaki K."/>
            <person name="Sato F."/>
        </authorList>
    </citation>
    <scope>NUCLEOTIDE SEQUENCE [MRNA]</scope>
    <scope>FUNCTION</scope>
    <scope>ENZYME ACTIVITY</scope>
    <scope>BIOPHYSICOCHEMICAL PROPERTIES</scope>
</reference>
<accession>Q8H9A8</accession>
<organism>
    <name type="scientific">Coptis japonica</name>
    <name type="common">Japanese goldthread</name>
    <dbReference type="NCBI Taxonomy" id="3442"/>
    <lineage>
        <taxon>Eukaryota</taxon>
        <taxon>Viridiplantae</taxon>
        <taxon>Streptophyta</taxon>
        <taxon>Embryophyta</taxon>
        <taxon>Tracheophyta</taxon>
        <taxon>Spermatophyta</taxon>
        <taxon>Magnoliopsida</taxon>
        <taxon>Ranunculales</taxon>
        <taxon>Ranunculaceae</taxon>
        <taxon>Coptidoideae</taxon>
        <taxon>Coptis</taxon>
    </lineage>
</organism>
<evidence type="ECO:0000250" key="1"/>
<evidence type="ECO:0000255" key="2">
    <source>
        <dbReference type="PROSITE-ProRule" id="PRU01020"/>
    </source>
</evidence>
<evidence type="ECO:0000269" key="3">
    <source>
    </source>
</evidence>
<comment type="function">
    <text evidence="3">Catalyzes the conversion of tetrahydrocolumbamine to (S)-tetrahydropalmatine and of columbamine to palmatine, an isoquinoline alkaloid.</text>
</comment>
<comment type="catalytic activity">
    <reaction evidence="3">
        <text>columbamine + S-adenosyl-L-methionine = palmatine + S-adenosyl-L-homocysteine + H(+)</text>
        <dbReference type="Rhea" id="RHEA:15373"/>
        <dbReference type="ChEBI" id="CHEBI:15378"/>
        <dbReference type="ChEBI" id="CHEBI:15920"/>
        <dbReference type="ChEBI" id="CHEBI:16096"/>
        <dbReference type="ChEBI" id="CHEBI:57856"/>
        <dbReference type="ChEBI" id="CHEBI:59789"/>
        <dbReference type="EC" id="2.1.1.118"/>
    </reaction>
</comment>
<comment type="catalytic activity">
    <reaction evidence="3">
        <text>(S)-tetrahydrocolumbamine + S-adenosyl-L-methionine = (S)-tetrahydropalmatine + S-adenosyl-L-homocysteine + H(+)</text>
        <dbReference type="Rhea" id="RHEA:22536"/>
        <dbReference type="ChEBI" id="CHEBI:15378"/>
        <dbReference type="ChEBI" id="CHEBI:16563"/>
        <dbReference type="ChEBI" id="CHEBI:17772"/>
        <dbReference type="ChEBI" id="CHEBI:57856"/>
        <dbReference type="ChEBI" id="CHEBI:59789"/>
        <dbReference type="EC" id="2.1.1.89"/>
    </reaction>
</comment>
<comment type="biophysicochemical properties">
    <kinetics>
        <KM evidence="3">66 uM for columbamine</KM>
        <KM evidence="3">35 uM for tetrahydrocolumbamine</KM>
        <KM evidence="3">173 uM for (S)-scoulerine</KM>
    </kinetics>
</comment>
<comment type="pathway">
    <text>Alkaloid biosynthesis; palmatine biosynthesis; palmatine from columbamine: step 1/1.</text>
</comment>
<comment type="subunit">
    <text evidence="1">Homodimer.</text>
</comment>
<comment type="similarity">
    <text evidence="2">Belongs to the class I-like SAM-binding methyltransferase superfamily. Cation-independent O-methyltransferase family. COMT subfamily.</text>
</comment>